<gene>
    <name evidence="1" type="primary">rpo3</name>
    <name evidence="1" type="synonym">rpoD</name>
    <name type="ordered locus">MJ0192</name>
</gene>
<keyword id="KW-0963">Cytoplasm</keyword>
<keyword id="KW-0240">DNA-directed RNA polymerase</keyword>
<keyword id="KW-0548">Nucleotidyltransferase</keyword>
<keyword id="KW-1185">Reference proteome</keyword>
<keyword id="KW-0804">Transcription</keyword>
<keyword id="KW-0808">Transferase</keyword>
<proteinExistence type="evidence at protein level"/>
<dbReference type="EC" id="2.7.7.6" evidence="1"/>
<dbReference type="EMBL" id="L77117">
    <property type="protein sequence ID" value="AAB98172.1"/>
    <property type="molecule type" value="Genomic_DNA"/>
</dbReference>
<dbReference type="PIR" id="A64324">
    <property type="entry name" value="A64324"/>
</dbReference>
<dbReference type="RefSeq" id="WP_010869687.1">
    <property type="nucleotide sequence ID" value="NC_000909.1"/>
</dbReference>
<dbReference type="SMR" id="Q57648"/>
<dbReference type="FunCoup" id="Q57648">
    <property type="interactions" value="75"/>
</dbReference>
<dbReference type="IntAct" id="Q57648">
    <property type="interactions" value="3"/>
</dbReference>
<dbReference type="STRING" id="243232.MJ_0192"/>
<dbReference type="PaxDb" id="243232-MJ_0192"/>
<dbReference type="EnsemblBacteria" id="AAB98172">
    <property type="protein sequence ID" value="AAB98172"/>
    <property type="gene ID" value="MJ_0192"/>
</dbReference>
<dbReference type="GeneID" id="1451040"/>
<dbReference type="KEGG" id="mja:MJ_0192"/>
<dbReference type="eggNOG" id="arCOG04241">
    <property type="taxonomic scope" value="Archaea"/>
</dbReference>
<dbReference type="HOGENOM" id="CLU_038421_3_1_2"/>
<dbReference type="InParanoid" id="Q57648"/>
<dbReference type="OrthoDB" id="84933at2157"/>
<dbReference type="PhylomeDB" id="Q57648"/>
<dbReference type="Proteomes" id="UP000000805">
    <property type="component" value="Chromosome"/>
</dbReference>
<dbReference type="GO" id="GO:0005737">
    <property type="term" value="C:cytoplasm"/>
    <property type="evidence" value="ECO:0007669"/>
    <property type="project" value="UniProtKB-SubCell"/>
</dbReference>
<dbReference type="GO" id="GO:0000428">
    <property type="term" value="C:DNA-directed RNA polymerase complex"/>
    <property type="evidence" value="ECO:0007669"/>
    <property type="project" value="UniProtKB-KW"/>
</dbReference>
<dbReference type="GO" id="GO:0003677">
    <property type="term" value="F:DNA binding"/>
    <property type="evidence" value="ECO:0007669"/>
    <property type="project" value="UniProtKB-UniRule"/>
</dbReference>
<dbReference type="GO" id="GO:0003899">
    <property type="term" value="F:DNA-directed RNA polymerase activity"/>
    <property type="evidence" value="ECO:0007669"/>
    <property type="project" value="UniProtKB-UniRule"/>
</dbReference>
<dbReference type="GO" id="GO:0046983">
    <property type="term" value="F:protein dimerization activity"/>
    <property type="evidence" value="ECO:0007669"/>
    <property type="project" value="InterPro"/>
</dbReference>
<dbReference type="GO" id="GO:0006351">
    <property type="term" value="P:DNA-templated transcription"/>
    <property type="evidence" value="ECO:0007669"/>
    <property type="project" value="UniProtKB-UniRule"/>
</dbReference>
<dbReference type="Gene3D" id="2.170.120.12">
    <property type="entry name" value="DNA-directed RNA polymerase, insert domain"/>
    <property type="match status" value="1"/>
</dbReference>
<dbReference type="Gene3D" id="3.30.1360.10">
    <property type="entry name" value="RNA polymerase, RBP11-like subunit"/>
    <property type="match status" value="2"/>
</dbReference>
<dbReference type="HAMAP" id="MF_00320">
    <property type="entry name" value="RNApol_arch_Rpo3"/>
    <property type="match status" value="1"/>
</dbReference>
<dbReference type="InterPro" id="IPR001514">
    <property type="entry name" value="DNA-dir_RNA_pol_30-40kDasu_CS"/>
</dbReference>
<dbReference type="InterPro" id="IPR011262">
    <property type="entry name" value="DNA-dir_RNA_pol_insert"/>
</dbReference>
<dbReference type="InterPro" id="IPR011263">
    <property type="entry name" value="DNA-dir_RNA_pol_RpoA/D/Rpb3"/>
</dbReference>
<dbReference type="InterPro" id="IPR036603">
    <property type="entry name" value="RBP11-like"/>
</dbReference>
<dbReference type="InterPro" id="IPR022842">
    <property type="entry name" value="RNAP_Rpo3/Rpb3/RPAC1"/>
</dbReference>
<dbReference type="InterPro" id="IPR036643">
    <property type="entry name" value="RNApol_insert_sf"/>
</dbReference>
<dbReference type="InterPro" id="IPR050518">
    <property type="entry name" value="Rpo3/RPB3_RNA_Pol_subunit"/>
</dbReference>
<dbReference type="NCBIfam" id="NF001988">
    <property type="entry name" value="PRK00783.1"/>
    <property type="match status" value="1"/>
</dbReference>
<dbReference type="NCBIfam" id="NF011548">
    <property type="entry name" value="PRK14979.1"/>
    <property type="match status" value="1"/>
</dbReference>
<dbReference type="PANTHER" id="PTHR11800">
    <property type="entry name" value="DNA-DIRECTED RNA POLYMERASE"/>
    <property type="match status" value="1"/>
</dbReference>
<dbReference type="PANTHER" id="PTHR11800:SF2">
    <property type="entry name" value="DNA-DIRECTED RNA POLYMERASE II SUBUNIT RPB3"/>
    <property type="match status" value="1"/>
</dbReference>
<dbReference type="Pfam" id="PF01000">
    <property type="entry name" value="RNA_pol_A_bac"/>
    <property type="match status" value="1"/>
</dbReference>
<dbReference type="Pfam" id="PF01193">
    <property type="entry name" value="RNA_pol_L"/>
    <property type="match status" value="1"/>
</dbReference>
<dbReference type="SMART" id="SM00662">
    <property type="entry name" value="RPOLD"/>
    <property type="match status" value="1"/>
</dbReference>
<dbReference type="SUPFAM" id="SSF56553">
    <property type="entry name" value="Insert subdomain of RNA polymerase alpha subunit"/>
    <property type="match status" value="1"/>
</dbReference>
<dbReference type="SUPFAM" id="SSF55257">
    <property type="entry name" value="RBP11-like subunits of RNA polymerase"/>
    <property type="match status" value="1"/>
</dbReference>
<dbReference type="PROSITE" id="PS00446">
    <property type="entry name" value="RNA_POL_D_30KD"/>
    <property type="match status" value="1"/>
</dbReference>
<organism>
    <name type="scientific">Methanocaldococcus jannaschii (strain ATCC 43067 / DSM 2661 / JAL-1 / JCM 10045 / NBRC 100440)</name>
    <name type="common">Methanococcus jannaschii</name>
    <dbReference type="NCBI Taxonomy" id="243232"/>
    <lineage>
        <taxon>Archaea</taxon>
        <taxon>Methanobacteriati</taxon>
        <taxon>Methanobacteriota</taxon>
        <taxon>Methanomada group</taxon>
        <taxon>Methanococci</taxon>
        <taxon>Methanococcales</taxon>
        <taxon>Methanocaldococcaceae</taxon>
        <taxon>Methanocaldococcus</taxon>
    </lineage>
</organism>
<feature type="chain" id="PRO_0000132754" description="DNA-directed RNA polymerase subunit Rpo3">
    <location>
        <begin position="1"/>
        <end position="191"/>
    </location>
</feature>
<accession>Q57648</accession>
<evidence type="ECO:0000255" key="1">
    <source>
        <dbReference type="HAMAP-Rule" id="MF_00320"/>
    </source>
</evidence>
<evidence type="ECO:0000269" key="2">
    <source>
    </source>
</evidence>
<evidence type="ECO:0000303" key="3">
    <source>
    </source>
</evidence>
<protein>
    <recommendedName>
        <fullName evidence="1">DNA-directed RNA polymerase subunit Rpo3</fullName>
        <ecNumber evidence="1">2.7.7.6</ecNumber>
    </recommendedName>
    <alternativeName>
        <fullName evidence="1">DNA-directed RNA polymerase subunit D</fullName>
        <shortName evidence="3">mjD</shortName>
    </alternativeName>
</protein>
<name>RPO3_METJA</name>
<comment type="function">
    <text evidence="1">DNA-dependent RNA polymerase (RNAP) catalyzes the transcription of DNA into RNA using the four ribonucleoside triphosphates as substrates.</text>
</comment>
<comment type="catalytic activity">
    <reaction evidence="1">
        <text>RNA(n) + a ribonucleoside 5'-triphosphate = RNA(n+1) + diphosphate</text>
        <dbReference type="Rhea" id="RHEA:21248"/>
        <dbReference type="Rhea" id="RHEA-COMP:14527"/>
        <dbReference type="Rhea" id="RHEA-COMP:17342"/>
        <dbReference type="ChEBI" id="CHEBI:33019"/>
        <dbReference type="ChEBI" id="CHEBI:61557"/>
        <dbReference type="ChEBI" id="CHEBI:140395"/>
        <dbReference type="EC" id="2.7.7.6"/>
    </reaction>
</comment>
<comment type="subunit">
    <text evidence="1 2">Part of the RNA polymerase complex (By similarity). Interacts with Rpo12. Forms an Rpo3-Rpo10-Rpo11-Rpo12 complex upon coexpression (PubMed:11058130).</text>
</comment>
<comment type="interaction">
    <interactant intactId="EBI-2567023">
        <id>Q57648</id>
    </interactant>
    <interactant intactId="EBI-2567038">
        <id>Q57832</id>
        <label>rpo11</label>
    </interactant>
    <organismsDiffer>false</organismsDiffer>
    <experiments>3</experiments>
</comment>
<comment type="subcellular location">
    <subcellularLocation>
        <location evidence="1">Cytoplasm</location>
    </subcellularLocation>
</comment>
<comment type="similarity">
    <text evidence="1">Belongs to the archaeal Rpo3/eukaryotic RPB3 RNA polymerase subunit family.</text>
</comment>
<reference key="1">
    <citation type="journal article" date="1996" name="Science">
        <title>Complete genome sequence of the methanogenic archaeon, Methanococcus jannaschii.</title>
        <authorList>
            <person name="Bult C.J."/>
            <person name="White O."/>
            <person name="Olsen G.J."/>
            <person name="Zhou L."/>
            <person name="Fleischmann R.D."/>
            <person name="Sutton G.G."/>
            <person name="Blake J.A."/>
            <person name="FitzGerald L.M."/>
            <person name="Clayton R.A."/>
            <person name="Gocayne J.D."/>
            <person name="Kerlavage A.R."/>
            <person name="Dougherty B.A."/>
            <person name="Tomb J.-F."/>
            <person name="Adams M.D."/>
            <person name="Reich C.I."/>
            <person name="Overbeek R."/>
            <person name="Kirkness E.F."/>
            <person name="Weinstock K.G."/>
            <person name="Merrick J.M."/>
            <person name="Glodek A."/>
            <person name="Scott J.L."/>
            <person name="Geoghagen N.S.M."/>
            <person name="Weidman J.F."/>
            <person name="Fuhrmann J.L."/>
            <person name="Nguyen D."/>
            <person name="Utterback T.R."/>
            <person name="Kelley J.M."/>
            <person name="Peterson J.D."/>
            <person name="Sadow P.W."/>
            <person name="Hanna M.C."/>
            <person name="Cotton M.D."/>
            <person name="Roberts K.M."/>
            <person name="Hurst M.A."/>
            <person name="Kaine B.P."/>
            <person name="Borodovsky M."/>
            <person name="Klenk H.-P."/>
            <person name="Fraser C.M."/>
            <person name="Smith H.O."/>
            <person name="Woese C.R."/>
            <person name="Venter J.C."/>
        </authorList>
    </citation>
    <scope>NUCLEOTIDE SEQUENCE [LARGE SCALE GENOMIC DNA]</scope>
    <source>
        <strain>ATCC 43067 / DSM 2661 / JAL-1 / JCM 10045 / NBRC 100440</strain>
    </source>
</reference>
<reference key="2">
    <citation type="journal article" date="2000" name="Nucleic Acids Res.">
        <title>Archaeal RNA polymerase subunits F and P are bona fide homologs of eukaryotic RPB4 and RPB12.</title>
        <authorList>
            <person name="Werner F."/>
            <person name="Eloranta J.J."/>
            <person name="Weinzierl R.O."/>
        </authorList>
    </citation>
    <scope>INTERACTION WITH RPO12</scope>
    <scope>SUBUNIT</scope>
</reference>
<sequence>MITIKEKRKTRIGEEFIFSLKAPISFSNAIRRIMISEVPTFAIEDVYIYENSSSMDDEILAHRLGLIPIKGKPLLENEVITFTLEKEGPCTVYSSDLKSENGEVAFKNIPIVKLGKGQRIQIECEAIPGIGKVHAKWQPCNAVYKQIADDEVEFFVETFGQMEAEEILEEAVKILKNKAESFLQQLEMIEQ</sequence>